<feature type="chain" id="PRO_1000165419" description="Small ribosomal subunit protein uS4">
    <location>
        <begin position="1"/>
        <end position="199"/>
    </location>
</feature>
<feature type="domain" description="S4 RNA-binding" evidence="1">
    <location>
        <begin position="91"/>
        <end position="154"/>
    </location>
</feature>
<evidence type="ECO:0000255" key="1">
    <source>
        <dbReference type="HAMAP-Rule" id="MF_01306"/>
    </source>
</evidence>
<evidence type="ECO:0000305" key="2"/>
<sequence>MSRYTGSIWKVSRRLNYSLSETGKELIKRPYAPGMHGKKRIKAKDYGLQLQEKQKVRFTYGISEKQFKKIFKDAGKLKGIHGEMFLFLLESRLDNVVYRLGFAKTRQQARQLVNHGHILVDGKKVDIPSYSLRVGQIITLKEKSKDLIIVKEALANKLNRVDYISLNKELVGKYVRIPHRDELLPNIKEQLIVEFYNRK</sequence>
<dbReference type="EMBL" id="CU469464">
    <property type="protein sequence ID" value="CAP18497.1"/>
    <property type="molecule type" value="Genomic_DNA"/>
</dbReference>
<dbReference type="SMR" id="B3QZW0"/>
<dbReference type="STRING" id="37692.ATP_00310"/>
<dbReference type="KEGG" id="pml:ATP_00310"/>
<dbReference type="eggNOG" id="COG0522">
    <property type="taxonomic scope" value="Bacteria"/>
</dbReference>
<dbReference type="HOGENOM" id="CLU_092403_0_1_14"/>
<dbReference type="Proteomes" id="UP000002020">
    <property type="component" value="Chromosome"/>
</dbReference>
<dbReference type="GO" id="GO:0015935">
    <property type="term" value="C:small ribosomal subunit"/>
    <property type="evidence" value="ECO:0007669"/>
    <property type="project" value="InterPro"/>
</dbReference>
<dbReference type="GO" id="GO:0019843">
    <property type="term" value="F:rRNA binding"/>
    <property type="evidence" value="ECO:0007669"/>
    <property type="project" value="UniProtKB-UniRule"/>
</dbReference>
<dbReference type="GO" id="GO:0003735">
    <property type="term" value="F:structural constituent of ribosome"/>
    <property type="evidence" value="ECO:0007669"/>
    <property type="project" value="InterPro"/>
</dbReference>
<dbReference type="GO" id="GO:0042274">
    <property type="term" value="P:ribosomal small subunit biogenesis"/>
    <property type="evidence" value="ECO:0007669"/>
    <property type="project" value="TreeGrafter"/>
</dbReference>
<dbReference type="GO" id="GO:0006412">
    <property type="term" value="P:translation"/>
    <property type="evidence" value="ECO:0007669"/>
    <property type="project" value="UniProtKB-UniRule"/>
</dbReference>
<dbReference type="CDD" id="cd00165">
    <property type="entry name" value="S4"/>
    <property type="match status" value="1"/>
</dbReference>
<dbReference type="FunFam" id="3.10.290.10:FF:000001">
    <property type="entry name" value="30S ribosomal protein S4"/>
    <property type="match status" value="1"/>
</dbReference>
<dbReference type="Gene3D" id="1.10.1050.10">
    <property type="entry name" value="Ribosomal Protein S4 Delta 41, Chain A, domain 1"/>
    <property type="match status" value="1"/>
</dbReference>
<dbReference type="Gene3D" id="3.10.290.10">
    <property type="entry name" value="RNA-binding S4 domain"/>
    <property type="match status" value="1"/>
</dbReference>
<dbReference type="HAMAP" id="MF_01306_B">
    <property type="entry name" value="Ribosomal_uS4_B"/>
    <property type="match status" value="1"/>
</dbReference>
<dbReference type="InterPro" id="IPR022801">
    <property type="entry name" value="Ribosomal_uS4"/>
</dbReference>
<dbReference type="InterPro" id="IPR005709">
    <property type="entry name" value="Ribosomal_uS4_bac-type"/>
</dbReference>
<dbReference type="InterPro" id="IPR018079">
    <property type="entry name" value="Ribosomal_uS4_CS"/>
</dbReference>
<dbReference type="InterPro" id="IPR001912">
    <property type="entry name" value="Ribosomal_uS4_N"/>
</dbReference>
<dbReference type="InterPro" id="IPR002942">
    <property type="entry name" value="S4_RNA-bd"/>
</dbReference>
<dbReference type="InterPro" id="IPR036986">
    <property type="entry name" value="S4_RNA-bd_sf"/>
</dbReference>
<dbReference type="NCBIfam" id="NF003717">
    <property type="entry name" value="PRK05327.1"/>
    <property type="match status" value="1"/>
</dbReference>
<dbReference type="NCBIfam" id="TIGR01017">
    <property type="entry name" value="rpsD_bact"/>
    <property type="match status" value="1"/>
</dbReference>
<dbReference type="PANTHER" id="PTHR11831">
    <property type="entry name" value="30S 40S RIBOSOMAL PROTEIN"/>
    <property type="match status" value="1"/>
</dbReference>
<dbReference type="PANTHER" id="PTHR11831:SF4">
    <property type="entry name" value="SMALL RIBOSOMAL SUBUNIT PROTEIN US4M"/>
    <property type="match status" value="1"/>
</dbReference>
<dbReference type="Pfam" id="PF00163">
    <property type="entry name" value="Ribosomal_S4"/>
    <property type="match status" value="1"/>
</dbReference>
<dbReference type="Pfam" id="PF01479">
    <property type="entry name" value="S4"/>
    <property type="match status" value="1"/>
</dbReference>
<dbReference type="SMART" id="SM01390">
    <property type="entry name" value="Ribosomal_S4"/>
    <property type="match status" value="1"/>
</dbReference>
<dbReference type="SMART" id="SM00363">
    <property type="entry name" value="S4"/>
    <property type="match status" value="1"/>
</dbReference>
<dbReference type="SUPFAM" id="SSF55174">
    <property type="entry name" value="Alpha-L RNA-binding motif"/>
    <property type="match status" value="1"/>
</dbReference>
<dbReference type="PROSITE" id="PS00632">
    <property type="entry name" value="RIBOSOMAL_S4"/>
    <property type="match status" value="1"/>
</dbReference>
<dbReference type="PROSITE" id="PS50889">
    <property type="entry name" value="S4"/>
    <property type="match status" value="1"/>
</dbReference>
<keyword id="KW-1185">Reference proteome</keyword>
<keyword id="KW-0687">Ribonucleoprotein</keyword>
<keyword id="KW-0689">Ribosomal protein</keyword>
<keyword id="KW-0694">RNA-binding</keyword>
<keyword id="KW-0699">rRNA-binding</keyword>
<name>RS4_PHYMT</name>
<accession>B3QZW0</accession>
<protein>
    <recommendedName>
        <fullName evidence="1">Small ribosomal subunit protein uS4</fullName>
    </recommendedName>
    <alternativeName>
        <fullName evidence="2">30S ribosomal protein S4</fullName>
    </alternativeName>
</protein>
<gene>
    <name evidence="1" type="primary">rpsD</name>
    <name type="ordered locus">ATP_00310</name>
</gene>
<proteinExistence type="inferred from homology"/>
<reference key="1">
    <citation type="journal article" date="2008" name="BMC Genomics">
        <title>The linear chromosome of the plant-pathogenic mycoplasma 'Candidatus Phytoplasma mali'.</title>
        <authorList>
            <person name="Kube M."/>
            <person name="Schneider B."/>
            <person name="Kuhl H."/>
            <person name="Dandekar T."/>
            <person name="Heitmann K."/>
            <person name="Migdoll A.M."/>
            <person name="Reinhardt R."/>
            <person name="Seemueller E."/>
        </authorList>
    </citation>
    <scope>NUCLEOTIDE SEQUENCE [LARGE SCALE GENOMIC DNA]</scope>
    <source>
        <strain>AT</strain>
    </source>
</reference>
<comment type="function">
    <text evidence="1">One of the primary rRNA binding proteins, it binds directly to 16S rRNA where it nucleates assembly of the body of the 30S subunit.</text>
</comment>
<comment type="function">
    <text evidence="1">With S5 and S12 plays an important role in translational accuracy.</text>
</comment>
<comment type="subunit">
    <text evidence="1">Part of the 30S ribosomal subunit. Contacts protein S5. The interaction surface between S4 and S5 is involved in control of translational fidelity.</text>
</comment>
<comment type="similarity">
    <text evidence="1">Belongs to the universal ribosomal protein uS4 family.</text>
</comment>
<organism>
    <name type="scientific">Phytoplasma mali (strain AT)</name>
    <dbReference type="NCBI Taxonomy" id="482235"/>
    <lineage>
        <taxon>Bacteria</taxon>
        <taxon>Bacillati</taxon>
        <taxon>Mycoplasmatota</taxon>
        <taxon>Mollicutes</taxon>
        <taxon>Acholeplasmatales</taxon>
        <taxon>Acholeplasmataceae</taxon>
        <taxon>Candidatus Phytoplasma</taxon>
        <taxon>16SrX (Apple proliferation group)</taxon>
    </lineage>
</organism>